<organism>
    <name type="scientific">Paracoccidioides brasiliensis (strain Pb18)</name>
    <dbReference type="NCBI Taxonomy" id="502780"/>
    <lineage>
        <taxon>Eukaryota</taxon>
        <taxon>Fungi</taxon>
        <taxon>Dikarya</taxon>
        <taxon>Ascomycota</taxon>
        <taxon>Pezizomycotina</taxon>
        <taxon>Eurotiomycetes</taxon>
        <taxon>Eurotiomycetidae</taxon>
        <taxon>Onygenales</taxon>
        <taxon>Ajellomycetaceae</taxon>
        <taxon>Paracoccidioides</taxon>
    </lineage>
</organism>
<sequence>MGTYPAFSGSPQLPEQRLHGTTNLNPAGGYRIELQIQDATFDKYPAKQHAQRVAAKIKKGKGLIFLMGQKAALLEDSDQETRFRQRRYFFYMSGVNEADCDLTYDIQSDKLTLYVPNFDLGREIWMGPTLGPQDALKRYDIDEAKYQSFLQGDIKQWASCSGHGSTIYTLHDSQKPTGDFPNVFMDSETLKPAMDACRVIKDEHEIEQMRHANRVSTAAHIAVLQGICKMTNEAQIEGSFLNTCVSLGAHNQAYGIIAASGANAATLHYSKNNEPLKGRQFVCLDAGAEWNCHASDVTRTFPLTARWPGTEAEQIYALVQNMQESCILRIKEGVRYLDLHHLAHDILIHGFLAIGIFKAGTADEIKKSGASSLFFPHGLGHHIGLEVHDVSPDSIFAQDNDGTTDSWLFSSTYLSPCTASSPTLKSGMVVTVEPGIYFSQIALDNAKPAQLKHIDMDVVKRYMAVGGVRIEDDILVTKDGFENLTSAPKGQAMLDYIQQGNGSCDI</sequence>
<protein>
    <recommendedName>
        <fullName>Probable Xaa-Pro aminopeptidase PADG_06815</fullName>
        <ecNumber>3.4.11.9</ecNumber>
    </recommendedName>
    <alternativeName>
        <fullName>Aminoacylproline aminopeptidase</fullName>
    </alternativeName>
    <alternativeName>
        <fullName>Prolidase</fullName>
    </alternativeName>
</protein>
<comment type="function">
    <text evidence="1">Catalyzes the removal of a penultimate prolyl residue from the N-termini of peptides.</text>
</comment>
<comment type="catalytic activity">
    <reaction>
        <text>Release of any N-terminal amino acid, including proline, that is linked to proline, even from a dipeptide or tripeptide.</text>
        <dbReference type="EC" id="3.4.11.9"/>
    </reaction>
</comment>
<comment type="cofactor">
    <cofactor evidence="1">
        <name>Mn(2+)</name>
        <dbReference type="ChEBI" id="CHEBI:29035"/>
    </cofactor>
    <text evidence="1">Binds 2 manganese ions per subunit.</text>
</comment>
<comment type="similarity">
    <text evidence="2">Belongs to the peptidase M24B family.</text>
</comment>
<keyword id="KW-0031">Aminopeptidase</keyword>
<keyword id="KW-0378">Hydrolase</keyword>
<keyword id="KW-0464">Manganese</keyword>
<keyword id="KW-0479">Metal-binding</keyword>
<keyword id="KW-0482">Metalloprotease</keyword>
<keyword id="KW-0645">Protease</keyword>
<keyword id="KW-1185">Reference proteome</keyword>
<name>AMPP2_PARBD</name>
<accession>C1GHS9</accession>
<gene>
    <name type="ORF">PADG_06815</name>
</gene>
<proteinExistence type="inferred from homology"/>
<dbReference type="EC" id="3.4.11.9"/>
<dbReference type="EMBL" id="KN275965">
    <property type="protein sequence ID" value="EEH50736.2"/>
    <property type="molecule type" value="Genomic_DNA"/>
</dbReference>
<dbReference type="RefSeq" id="XP_010762101.1">
    <property type="nucleotide sequence ID" value="XM_010763799.1"/>
</dbReference>
<dbReference type="SMR" id="C1GHS9"/>
<dbReference type="STRING" id="502780.C1GHS9"/>
<dbReference type="GeneID" id="22585451"/>
<dbReference type="KEGG" id="pbn:PADG_06815"/>
<dbReference type="VEuPathDB" id="FungiDB:PADG_06815"/>
<dbReference type="eggNOG" id="KOG2737">
    <property type="taxonomic scope" value="Eukaryota"/>
</dbReference>
<dbReference type="HOGENOM" id="CLU_017266_1_2_1"/>
<dbReference type="InParanoid" id="C1GHS9"/>
<dbReference type="OMA" id="YELRMIR"/>
<dbReference type="OrthoDB" id="9302at33183"/>
<dbReference type="Proteomes" id="UP000001628">
    <property type="component" value="Unassembled WGS sequence"/>
</dbReference>
<dbReference type="GO" id="GO:0030145">
    <property type="term" value="F:manganese ion binding"/>
    <property type="evidence" value="ECO:0007669"/>
    <property type="project" value="InterPro"/>
</dbReference>
<dbReference type="GO" id="GO:0070006">
    <property type="term" value="F:metalloaminopeptidase activity"/>
    <property type="evidence" value="ECO:0007669"/>
    <property type="project" value="InterPro"/>
</dbReference>
<dbReference type="GO" id="GO:0006508">
    <property type="term" value="P:proteolysis"/>
    <property type="evidence" value="ECO:0007669"/>
    <property type="project" value="UniProtKB-KW"/>
</dbReference>
<dbReference type="CDD" id="cd01087">
    <property type="entry name" value="Prolidase"/>
    <property type="match status" value="1"/>
</dbReference>
<dbReference type="Gene3D" id="3.90.230.10">
    <property type="entry name" value="Creatinase/methionine aminopeptidase superfamily"/>
    <property type="match status" value="1"/>
</dbReference>
<dbReference type="Gene3D" id="3.40.350.10">
    <property type="entry name" value="Creatinase/prolidase N-terminal domain"/>
    <property type="match status" value="1"/>
</dbReference>
<dbReference type="InterPro" id="IPR007865">
    <property type="entry name" value="Aminopep_P_N"/>
</dbReference>
<dbReference type="InterPro" id="IPR029149">
    <property type="entry name" value="Creatin/AminoP/Spt16_N"/>
</dbReference>
<dbReference type="InterPro" id="IPR036005">
    <property type="entry name" value="Creatinase/aminopeptidase-like"/>
</dbReference>
<dbReference type="InterPro" id="IPR000994">
    <property type="entry name" value="Pept_M24"/>
</dbReference>
<dbReference type="InterPro" id="IPR001131">
    <property type="entry name" value="Peptidase_M24B_aminopep-P_CS"/>
</dbReference>
<dbReference type="InterPro" id="IPR052433">
    <property type="entry name" value="X-Pro_dipept-like"/>
</dbReference>
<dbReference type="PANTHER" id="PTHR43226">
    <property type="entry name" value="XAA-PRO AMINOPEPTIDASE 3"/>
    <property type="match status" value="1"/>
</dbReference>
<dbReference type="PANTHER" id="PTHR43226:SF3">
    <property type="entry name" value="XAA-PRO AMINOPEPTIDASE AN0832-RELATED"/>
    <property type="match status" value="1"/>
</dbReference>
<dbReference type="Pfam" id="PF05195">
    <property type="entry name" value="AMP_N"/>
    <property type="match status" value="1"/>
</dbReference>
<dbReference type="Pfam" id="PF00557">
    <property type="entry name" value="Peptidase_M24"/>
    <property type="match status" value="1"/>
</dbReference>
<dbReference type="SMART" id="SM01011">
    <property type="entry name" value="AMP_N"/>
    <property type="match status" value="1"/>
</dbReference>
<dbReference type="SUPFAM" id="SSF55920">
    <property type="entry name" value="Creatinase/aminopeptidase"/>
    <property type="match status" value="1"/>
</dbReference>
<dbReference type="SUPFAM" id="SSF53092">
    <property type="entry name" value="Creatinase/prolidase N-terminal domain"/>
    <property type="match status" value="1"/>
</dbReference>
<dbReference type="PROSITE" id="PS00491">
    <property type="entry name" value="PROLINE_PEPTIDASE"/>
    <property type="match status" value="1"/>
</dbReference>
<evidence type="ECO:0000250" key="1"/>
<evidence type="ECO:0000305" key="2"/>
<feature type="chain" id="PRO_0000411843" description="Probable Xaa-Pro aminopeptidase PADG_06815">
    <location>
        <begin position="1"/>
        <end position="506"/>
    </location>
</feature>
<feature type="binding site" evidence="1">
    <location>
        <position position="285"/>
    </location>
    <ligand>
        <name>Mn(2+)</name>
        <dbReference type="ChEBI" id="CHEBI:29035"/>
        <label>2</label>
    </ligand>
</feature>
<feature type="binding site" evidence="1">
    <location>
        <position position="296"/>
    </location>
    <ligand>
        <name>Mn(2+)</name>
        <dbReference type="ChEBI" id="CHEBI:29035"/>
        <label>1</label>
    </ligand>
</feature>
<feature type="binding site" evidence="1">
    <location>
        <position position="296"/>
    </location>
    <ligand>
        <name>Mn(2+)</name>
        <dbReference type="ChEBI" id="CHEBI:29035"/>
        <label>2</label>
    </ligand>
</feature>
<feature type="binding site" evidence="1">
    <location>
        <position position="433"/>
    </location>
    <ligand>
        <name>Mn(2+)</name>
        <dbReference type="ChEBI" id="CHEBI:29035"/>
        <label>1</label>
    </ligand>
</feature>
<feature type="binding site" evidence="1">
    <location>
        <position position="471"/>
    </location>
    <ligand>
        <name>Mn(2+)</name>
        <dbReference type="ChEBI" id="CHEBI:29035"/>
        <label>1</label>
    </ligand>
</feature>
<feature type="binding site" evidence="1">
    <location>
        <position position="471"/>
    </location>
    <ligand>
        <name>Mn(2+)</name>
        <dbReference type="ChEBI" id="CHEBI:29035"/>
        <label>2</label>
    </ligand>
</feature>
<reference key="1">
    <citation type="journal article" date="2011" name="PLoS Genet.">
        <title>Comparative genomic analysis of human fungal pathogens causing paracoccidioidomycosis.</title>
        <authorList>
            <person name="Desjardins C.A."/>
            <person name="Champion M.D."/>
            <person name="Holder J.W."/>
            <person name="Muszewska A."/>
            <person name="Goldberg J."/>
            <person name="Bailao A.M."/>
            <person name="Brigido M.M."/>
            <person name="Ferreira M.E."/>
            <person name="Garcia A.M."/>
            <person name="Grynberg M."/>
            <person name="Gujja S."/>
            <person name="Heiman D.I."/>
            <person name="Henn M.R."/>
            <person name="Kodira C.D."/>
            <person name="Leon-Narvaez H."/>
            <person name="Longo L.V.G."/>
            <person name="Ma L.-J."/>
            <person name="Malavazi I."/>
            <person name="Matsuo A.L."/>
            <person name="Morais F.V."/>
            <person name="Pereira M."/>
            <person name="Rodriguez-Brito S."/>
            <person name="Sakthikumar S."/>
            <person name="Salem-Izacc S.M."/>
            <person name="Sykes S.M."/>
            <person name="Teixeira M.M."/>
            <person name="Vallejo M.C."/>
            <person name="Walter M.E."/>
            <person name="Yandava C."/>
            <person name="Young S."/>
            <person name="Zeng Q."/>
            <person name="Zucker J."/>
            <person name="Felipe M.S."/>
            <person name="Goldman G.H."/>
            <person name="Haas B.J."/>
            <person name="McEwen J.G."/>
            <person name="Nino-Vega G."/>
            <person name="Puccia R."/>
            <person name="San-Blas G."/>
            <person name="Soares C.M."/>
            <person name="Birren B.W."/>
            <person name="Cuomo C.A."/>
        </authorList>
    </citation>
    <scope>NUCLEOTIDE SEQUENCE [LARGE SCALE GENOMIC DNA]</scope>
    <source>
        <strain>Pb18</strain>
    </source>
</reference>